<protein>
    <recommendedName>
        <fullName>Thioredoxin-like protein R548</fullName>
    </recommendedName>
</protein>
<feature type="chain" id="PRO_0000244643" description="Thioredoxin-like protein R548">
    <location>
        <begin position="1"/>
        <end position="137"/>
    </location>
</feature>
<feature type="domain" description="Thioredoxin" evidence="2">
    <location>
        <begin position="2"/>
        <end position="137"/>
    </location>
</feature>
<feature type="active site" description="Nucleophile" evidence="1">
    <location>
        <position position="61"/>
    </location>
</feature>
<feature type="active site" description="Nucleophile" evidence="1">
    <location>
        <position position="64"/>
    </location>
</feature>
<feature type="site" description="Deprotonates C-terminal active site Cys" evidence="1">
    <location>
        <position position="55"/>
    </location>
</feature>
<feature type="site" description="Contributes to redox potential value" evidence="1">
    <location>
        <position position="62"/>
    </location>
</feature>
<feature type="site" description="Contributes to redox potential value" evidence="1">
    <location>
        <position position="63"/>
    </location>
</feature>
<feature type="disulfide bond" description="Redox-active" evidence="2">
    <location>
        <begin position="61"/>
        <end position="64"/>
    </location>
</feature>
<gene>
    <name type="ordered locus">MIMI_R548</name>
</gene>
<sequence>MSKDSVETNTIINTIDNTNDNTTNITKKNSVEEIITLNDFSTALGDESKGLVIIDFFTTWCGPCKRIAPDYIRMAEKYPTVSFYKINAENENLANIVAACEIVSLPTFCFFKAGKYIGRFVNADPVGLEKSIVESSQ</sequence>
<organism>
    <name type="scientific">Acanthamoeba polyphaga mimivirus</name>
    <name type="common">APMV</name>
    <dbReference type="NCBI Taxonomy" id="212035"/>
    <lineage>
        <taxon>Viruses</taxon>
        <taxon>Varidnaviria</taxon>
        <taxon>Bamfordvirae</taxon>
        <taxon>Nucleocytoviricota</taxon>
        <taxon>Megaviricetes</taxon>
        <taxon>Imitervirales</taxon>
        <taxon>Mimiviridae</taxon>
        <taxon>Megamimivirinae</taxon>
        <taxon>Mimivirus</taxon>
        <taxon>Mimivirus bradfordmassiliense</taxon>
    </lineage>
</organism>
<evidence type="ECO:0000250" key="1"/>
<evidence type="ECO:0000255" key="2">
    <source>
        <dbReference type="PROSITE-ProRule" id="PRU00691"/>
    </source>
</evidence>
<evidence type="ECO:0000305" key="3"/>
<organismHost>
    <name type="scientific">Acanthamoeba polyphaga</name>
    <name type="common">Amoeba</name>
    <dbReference type="NCBI Taxonomy" id="5757"/>
</organismHost>
<name>TR548_MIMIV</name>
<accession>Q5UR29</accession>
<dbReference type="EMBL" id="AY653733">
    <property type="protein sequence ID" value="AAV50812.1"/>
    <property type="molecule type" value="Genomic_DNA"/>
</dbReference>
<dbReference type="SMR" id="Q5UR29"/>
<dbReference type="KEGG" id="vg:9925183"/>
<dbReference type="OrthoDB" id="21274at10239"/>
<dbReference type="Proteomes" id="UP000001134">
    <property type="component" value="Genome"/>
</dbReference>
<dbReference type="CDD" id="cd02947">
    <property type="entry name" value="TRX_family"/>
    <property type="match status" value="1"/>
</dbReference>
<dbReference type="Gene3D" id="3.40.30.10">
    <property type="entry name" value="Glutaredoxin"/>
    <property type="match status" value="1"/>
</dbReference>
<dbReference type="InterPro" id="IPR036249">
    <property type="entry name" value="Thioredoxin-like_sf"/>
</dbReference>
<dbReference type="InterPro" id="IPR017937">
    <property type="entry name" value="Thioredoxin_CS"/>
</dbReference>
<dbReference type="InterPro" id="IPR013766">
    <property type="entry name" value="Thioredoxin_domain"/>
</dbReference>
<dbReference type="PANTHER" id="PTHR46115">
    <property type="entry name" value="THIOREDOXIN-LIKE PROTEIN 1"/>
    <property type="match status" value="1"/>
</dbReference>
<dbReference type="Pfam" id="PF00085">
    <property type="entry name" value="Thioredoxin"/>
    <property type="match status" value="1"/>
</dbReference>
<dbReference type="PRINTS" id="PR00421">
    <property type="entry name" value="THIOREDOXIN"/>
</dbReference>
<dbReference type="SUPFAM" id="SSF52833">
    <property type="entry name" value="Thioredoxin-like"/>
    <property type="match status" value="1"/>
</dbReference>
<dbReference type="PROSITE" id="PS00194">
    <property type="entry name" value="THIOREDOXIN_1"/>
    <property type="match status" value="1"/>
</dbReference>
<dbReference type="PROSITE" id="PS51352">
    <property type="entry name" value="THIOREDOXIN_2"/>
    <property type="match status" value="1"/>
</dbReference>
<reference key="1">
    <citation type="journal article" date="2004" name="Science">
        <title>The 1.2-megabase genome sequence of Mimivirus.</title>
        <authorList>
            <person name="Raoult D."/>
            <person name="Audic S."/>
            <person name="Robert C."/>
            <person name="Abergel C."/>
            <person name="Renesto P."/>
            <person name="Ogata H."/>
            <person name="La Scola B."/>
            <person name="Susan M."/>
            <person name="Claverie J.-M."/>
        </authorList>
    </citation>
    <scope>NUCLEOTIDE SEQUENCE [LARGE SCALE GENOMIC DNA]</scope>
    <source>
        <strain>Rowbotham-Bradford</strain>
    </source>
</reference>
<keyword id="KW-1015">Disulfide bond</keyword>
<keyword id="KW-0249">Electron transport</keyword>
<keyword id="KW-0676">Redox-active center</keyword>
<keyword id="KW-1185">Reference proteome</keyword>
<keyword id="KW-0813">Transport</keyword>
<comment type="function">
    <text evidence="1">Participates in various redox reactions through the reversible oxidation of its active center dithiol to a disulfide and catalyzes dithiol-disulfide exchange reactions.</text>
</comment>
<comment type="similarity">
    <text evidence="3">Belongs to the thioredoxin family.</text>
</comment>
<proteinExistence type="inferred from homology"/>